<gene>
    <name evidence="1" type="primary">hutH</name>
    <name type="ordered locus">PSPTO_5275</name>
</gene>
<proteinExistence type="inferred from homology"/>
<organism>
    <name type="scientific">Pseudomonas syringae pv. tomato (strain ATCC BAA-871 / DC3000)</name>
    <dbReference type="NCBI Taxonomy" id="223283"/>
    <lineage>
        <taxon>Bacteria</taxon>
        <taxon>Pseudomonadati</taxon>
        <taxon>Pseudomonadota</taxon>
        <taxon>Gammaproteobacteria</taxon>
        <taxon>Pseudomonadales</taxon>
        <taxon>Pseudomonadaceae</taxon>
        <taxon>Pseudomonas</taxon>
    </lineage>
</organism>
<evidence type="ECO:0000255" key="1">
    <source>
        <dbReference type="HAMAP-Rule" id="MF_00229"/>
    </source>
</evidence>
<comment type="catalytic activity">
    <reaction evidence="1">
        <text>L-histidine = trans-urocanate + NH4(+)</text>
        <dbReference type="Rhea" id="RHEA:21232"/>
        <dbReference type="ChEBI" id="CHEBI:17771"/>
        <dbReference type="ChEBI" id="CHEBI:28938"/>
        <dbReference type="ChEBI" id="CHEBI:57595"/>
        <dbReference type="EC" id="4.3.1.3"/>
    </reaction>
</comment>
<comment type="pathway">
    <text evidence="1">Amino-acid degradation; L-histidine degradation into L-glutamate; N-formimidoyl-L-glutamate from L-histidine: step 1/3.</text>
</comment>
<comment type="subcellular location">
    <subcellularLocation>
        <location evidence="1">Cytoplasm</location>
    </subcellularLocation>
</comment>
<comment type="PTM">
    <text evidence="1">Contains an active site 4-methylidene-imidazol-5-one (MIO), which is formed autocatalytically by cyclization and dehydration of residues Ala-Ser-Gly.</text>
</comment>
<comment type="similarity">
    <text evidence="1">Belongs to the PAL/histidase family.</text>
</comment>
<protein>
    <recommendedName>
        <fullName evidence="1">Histidine ammonia-lyase</fullName>
        <shortName evidence="1">Histidase</shortName>
        <ecNumber evidence="1">4.3.1.3</ecNumber>
    </recommendedName>
</protein>
<accession>Q87UM1</accession>
<sequence>MTTLSAKTLNLIPGQLTLAQLRAIHQQPVSLTLDSSANQQIDDSVACVERILAENRTAYGINTGFGLLASTRIASEDLENLQRSLVLSHAAGVGQPISDDLVRLIMVLKVNSLSRGFSGIRRVVIDALIALINAEVYPHIPLKGSVGASGDLAPLAHMSLVLLGEGKARHKGEWLNAVDALAVAGLKPLTLAAKEGLALLNGTQVSTAYALRGLFEGEDLFAAALTCGSLTVEAVLGSRSPFDARIHAARGQRGQIDAAACYRELLGESSGVSESHRNCDKVQDPYSLRCQPQVMGACLTQLRQAAEVLEVESNAVSDNPLVFAAENDVISGGNFHAEPVAMAADNLALAIAEIGSLSERRISLMMDKHMSQLPPFLVANGGVNSGFMIAQVTAAALASENKALAHPHSVDSLPTSANQEDHVSMAPAAGKRLWEMAENVRGILAVEWLAACQGLDLREGLKTSAKLEQARSLLRSKVPFYEKDRFFAPDIEAASQLLSSTCLNPLVPARLLPSL</sequence>
<feature type="chain" id="PRO_0000161019" description="Histidine ammonia-lyase">
    <location>
        <begin position="1"/>
        <end position="515"/>
    </location>
</feature>
<feature type="modified residue" description="2,3-didehydroalanine (Ser)" evidence="1">
    <location>
        <position position="149"/>
    </location>
</feature>
<feature type="cross-link" description="5-imidazolinone (Ala-Gly)" evidence="1">
    <location>
        <begin position="148"/>
        <end position="150"/>
    </location>
</feature>
<reference key="1">
    <citation type="journal article" date="2003" name="Proc. Natl. Acad. Sci. U.S.A.">
        <title>The complete genome sequence of the Arabidopsis and tomato pathogen Pseudomonas syringae pv. tomato DC3000.</title>
        <authorList>
            <person name="Buell C.R."/>
            <person name="Joardar V."/>
            <person name="Lindeberg M."/>
            <person name="Selengut J."/>
            <person name="Paulsen I.T."/>
            <person name="Gwinn M.L."/>
            <person name="Dodson R.J."/>
            <person name="DeBoy R.T."/>
            <person name="Durkin A.S."/>
            <person name="Kolonay J.F."/>
            <person name="Madupu R."/>
            <person name="Daugherty S.C."/>
            <person name="Brinkac L.M."/>
            <person name="Beanan M.J."/>
            <person name="Haft D.H."/>
            <person name="Nelson W.C."/>
            <person name="Davidsen T.M."/>
            <person name="Zafar N."/>
            <person name="Zhou L."/>
            <person name="Liu J."/>
            <person name="Yuan Q."/>
            <person name="Khouri H.M."/>
            <person name="Fedorova N.B."/>
            <person name="Tran B."/>
            <person name="Russell D."/>
            <person name="Berry K.J."/>
            <person name="Utterback T.R."/>
            <person name="Van Aken S.E."/>
            <person name="Feldblyum T.V."/>
            <person name="D'Ascenzo M."/>
            <person name="Deng W.-L."/>
            <person name="Ramos A.R."/>
            <person name="Alfano J.R."/>
            <person name="Cartinhour S."/>
            <person name="Chatterjee A.K."/>
            <person name="Delaney T.P."/>
            <person name="Lazarowitz S.G."/>
            <person name="Martin G.B."/>
            <person name="Schneider D.J."/>
            <person name="Tang X."/>
            <person name="Bender C.L."/>
            <person name="White O."/>
            <person name="Fraser C.M."/>
            <person name="Collmer A."/>
        </authorList>
    </citation>
    <scope>NUCLEOTIDE SEQUENCE [LARGE SCALE GENOMIC DNA]</scope>
    <source>
        <strain>ATCC BAA-871 / DC3000</strain>
    </source>
</reference>
<keyword id="KW-0963">Cytoplasm</keyword>
<keyword id="KW-0369">Histidine metabolism</keyword>
<keyword id="KW-0456">Lyase</keyword>
<keyword id="KW-1185">Reference proteome</keyword>
<name>HUTH_PSESM</name>
<dbReference type="EC" id="4.3.1.3" evidence="1"/>
<dbReference type="EMBL" id="AE016853">
    <property type="protein sequence ID" value="AAO58701.1"/>
    <property type="molecule type" value="Genomic_DNA"/>
</dbReference>
<dbReference type="RefSeq" id="NP_795006.1">
    <property type="nucleotide sequence ID" value="NC_004578.1"/>
</dbReference>
<dbReference type="RefSeq" id="WP_011105400.1">
    <property type="nucleotide sequence ID" value="NC_004578.1"/>
</dbReference>
<dbReference type="SMR" id="Q87UM1"/>
<dbReference type="STRING" id="223283.PSPTO_5275"/>
<dbReference type="GeneID" id="1186960"/>
<dbReference type="KEGG" id="pst:PSPTO_5275"/>
<dbReference type="PATRIC" id="fig|223283.9.peg.5399"/>
<dbReference type="eggNOG" id="COG2986">
    <property type="taxonomic scope" value="Bacteria"/>
</dbReference>
<dbReference type="HOGENOM" id="CLU_014801_4_0_6"/>
<dbReference type="OrthoDB" id="9806955at2"/>
<dbReference type="PhylomeDB" id="Q87UM1"/>
<dbReference type="UniPathway" id="UPA00379">
    <property type="reaction ID" value="UER00549"/>
</dbReference>
<dbReference type="Proteomes" id="UP000002515">
    <property type="component" value="Chromosome"/>
</dbReference>
<dbReference type="GO" id="GO:0005737">
    <property type="term" value="C:cytoplasm"/>
    <property type="evidence" value="ECO:0007669"/>
    <property type="project" value="UniProtKB-SubCell"/>
</dbReference>
<dbReference type="GO" id="GO:0004397">
    <property type="term" value="F:histidine ammonia-lyase activity"/>
    <property type="evidence" value="ECO:0007669"/>
    <property type="project" value="UniProtKB-UniRule"/>
</dbReference>
<dbReference type="GO" id="GO:0019556">
    <property type="term" value="P:L-histidine catabolic process to glutamate and formamide"/>
    <property type="evidence" value="ECO:0007669"/>
    <property type="project" value="UniProtKB-UniPathway"/>
</dbReference>
<dbReference type="GO" id="GO:0019557">
    <property type="term" value="P:L-histidine catabolic process to glutamate and formate"/>
    <property type="evidence" value="ECO:0007669"/>
    <property type="project" value="UniProtKB-UniPathway"/>
</dbReference>
<dbReference type="CDD" id="cd00332">
    <property type="entry name" value="PAL-HAL"/>
    <property type="match status" value="1"/>
</dbReference>
<dbReference type="FunFam" id="1.10.275.10:FF:000005">
    <property type="entry name" value="Histidine ammonia-lyase"/>
    <property type="match status" value="1"/>
</dbReference>
<dbReference type="FunFam" id="1.20.200.10:FF:000003">
    <property type="entry name" value="Histidine ammonia-lyase"/>
    <property type="match status" value="1"/>
</dbReference>
<dbReference type="Gene3D" id="1.20.200.10">
    <property type="entry name" value="Fumarase/aspartase (Central domain)"/>
    <property type="match status" value="1"/>
</dbReference>
<dbReference type="Gene3D" id="1.10.275.10">
    <property type="entry name" value="Fumarase/aspartase (N-terminal domain)"/>
    <property type="match status" value="1"/>
</dbReference>
<dbReference type="HAMAP" id="MF_00229">
    <property type="entry name" value="His_ammonia_lyase"/>
    <property type="match status" value="1"/>
</dbReference>
<dbReference type="InterPro" id="IPR001106">
    <property type="entry name" value="Aromatic_Lyase"/>
</dbReference>
<dbReference type="InterPro" id="IPR024083">
    <property type="entry name" value="Fumarase/histidase_N"/>
</dbReference>
<dbReference type="InterPro" id="IPR005921">
    <property type="entry name" value="HutH"/>
</dbReference>
<dbReference type="InterPro" id="IPR008948">
    <property type="entry name" value="L-Aspartase-like"/>
</dbReference>
<dbReference type="InterPro" id="IPR022313">
    <property type="entry name" value="Phe/His_NH3-lyase_AS"/>
</dbReference>
<dbReference type="NCBIfam" id="TIGR01225">
    <property type="entry name" value="hutH"/>
    <property type="match status" value="1"/>
</dbReference>
<dbReference type="NCBIfam" id="NF006871">
    <property type="entry name" value="PRK09367.1"/>
    <property type="match status" value="1"/>
</dbReference>
<dbReference type="PANTHER" id="PTHR10362">
    <property type="entry name" value="HISTIDINE AMMONIA-LYASE"/>
    <property type="match status" value="1"/>
</dbReference>
<dbReference type="Pfam" id="PF00221">
    <property type="entry name" value="Lyase_aromatic"/>
    <property type="match status" value="1"/>
</dbReference>
<dbReference type="SUPFAM" id="SSF48557">
    <property type="entry name" value="L-aspartase-like"/>
    <property type="match status" value="1"/>
</dbReference>
<dbReference type="PROSITE" id="PS00488">
    <property type="entry name" value="PAL_HISTIDASE"/>
    <property type="match status" value="1"/>
</dbReference>